<proteinExistence type="evidence at transcript level"/>
<dbReference type="EC" id="3.6.4.13"/>
<dbReference type="EMBL" id="AC002337">
    <property type="protein sequence ID" value="AAB63825.1"/>
    <property type="molecule type" value="Genomic_DNA"/>
</dbReference>
<dbReference type="EMBL" id="CP002685">
    <property type="protein sequence ID" value="AEC10820.1"/>
    <property type="molecule type" value="Genomic_DNA"/>
</dbReference>
<dbReference type="EMBL" id="AY128301">
    <property type="protein sequence ID" value="AAM91108.1"/>
    <property type="molecule type" value="mRNA"/>
</dbReference>
<dbReference type="EMBL" id="BT004534">
    <property type="protein sequence ID" value="AAO42780.1"/>
    <property type="molecule type" value="mRNA"/>
</dbReference>
<dbReference type="PIR" id="H84912">
    <property type="entry name" value="H84912"/>
</dbReference>
<dbReference type="RefSeq" id="NP_182247.1">
    <property type="nucleotide sequence ID" value="NM_130293.4"/>
</dbReference>
<dbReference type="SMR" id="O22899"/>
<dbReference type="BioGRID" id="4673">
    <property type="interactions" value="9"/>
</dbReference>
<dbReference type="FunCoup" id="O22899">
    <property type="interactions" value="4881"/>
</dbReference>
<dbReference type="STRING" id="3702.O22899"/>
<dbReference type="iPTMnet" id="O22899"/>
<dbReference type="PaxDb" id="3702-AT2G47250.1"/>
<dbReference type="ProteomicsDB" id="226474"/>
<dbReference type="EnsemblPlants" id="AT2G47250.1">
    <property type="protein sequence ID" value="AT2G47250.1"/>
    <property type="gene ID" value="AT2G47250"/>
</dbReference>
<dbReference type="GeneID" id="819338"/>
<dbReference type="Gramene" id="AT2G47250.1">
    <property type="protein sequence ID" value="AT2G47250.1"/>
    <property type="gene ID" value="AT2G47250"/>
</dbReference>
<dbReference type="KEGG" id="ath:AT2G47250"/>
<dbReference type="Araport" id="AT2G47250"/>
<dbReference type="TAIR" id="AT2G47250"/>
<dbReference type="eggNOG" id="KOG0925">
    <property type="taxonomic scope" value="Eukaryota"/>
</dbReference>
<dbReference type="HOGENOM" id="CLU_001832_5_11_1"/>
<dbReference type="InParanoid" id="O22899"/>
<dbReference type="OMA" id="DYHINIR"/>
<dbReference type="OrthoDB" id="10253254at2759"/>
<dbReference type="PhylomeDB" id="O22899"/>
<dbReference type="CD-CODE" id="4299E36E">
    <property type="entry name" value="Nucleolus"/>
</dbReference>
<dbReference type="PRO" id="PR:O22899"/>
<dbReference type="Proteomes" id="UP000006548">
    <property type="component" value="Chromosome 2"/>
</dbReference>
<dbReference type="ExpressionAtlas" id="O22899">
    <property type="expression patterns" value="baseline and differential"/>
</dbReference>
<dbReference type="GO" id="GO:0009941">
    <property type="term" value="C:chloroplast envelope"/>
    <property type="evidence" value="ECO:0007005"/>
    <property type="project" value="TAIR"/>
</dbReference>
<dbReference type="GO" id="GO:0005681">
    <property type="term" value="C:spliceosomal complex"/>
    <property type="evidence" value="ECO:0007669"/>
    <property type="project" value="UniProtKB-KW"/>
</dbReference>
<dbReference type="GO" id="GO:0005524">
    <property type="term" value="F:ATP binding"/>
    <property type="evidence" value="ECO:0007669"/>
    <property type="project" value="UniProtKB-KW"/>
</dbReference>
<dbReference type="GO" id="GO:0016887">
    <property type="term" value="F:ATP hydrolysis activity"/>
    <property type="evidence" value="ECO:0007669"/>
    <property type="project" value="RHEA"/>
</dbReference>
<dbReference type="GO" id="GO:0003729">
    <property type="term" value="F:mRNA binding"/>
    <property type="evidence" value="ECO:0000314"/>
    <property type="project" value="TAIR"/>
</dbReference>
<dbReference type="GO" id="GO:0003724">
    <property type="term" value="F:RNA helicase activity"/>
    <property type="evidence" value="ECO:0007669"/>
    <property type="project" value="UniProtKB-EC"/>
</dbReference>
<dbReference type="GO" id="GO:0006397">
    <property type="term" value="P:mRNA processing"/>
    <property type="evidence" value="ECO:0007669"/>
    <property type="project" value="UniProtKB-KW"/>
</dbReference>
<dbReference type="GO" id="GO:0008380">
    <property type="term" value="P:RNA splicing"/>
    <property type="evidence" value="ECO:0007669"/>
    <property type="project" value="UniProtKB-KW"/>
</dbReference>
<dbReference type="CDD" id="cd17973">
    <property type="entry name" value="DEXHc_DHX15"/>
    <property type="match status" value="1"/>
</dbReference>
<dbReference type="CDD" id="cd18791">
    <property type="entry name" value="SF2_C_RHA"/>
    <property type="match status" value="1"/>
</dbReference>
<dbReference type="FunFam" id="3.40.50.300:FF:000007">
    <property type="entry name" value="Pre-mRNA-splicing factor ATP-dependent RNA helicase"/>
    <property type="match status" value="1"/>
</dbReference>
<dbReference type="FunFam" id="1.20.120.1080:FF:000003">
    <property type="entry name" value="Pre-mRNA-splicing factor ATP-dependent RNA helicase PRP43"/>
    <property type="match status" value="1"/>
</dbReference>
<dbReference type="FunFam" id="3.40.50.300:FF:000951">
    <property type="entry name" value="Putative pre-mRNA-splicing factor ATP-dependent RNA helicase"/>
    <property type="match status" value="1"/>
</dbReference>
<dbReference type="Gene3D" id="1.20.120.1080">
    <property type="match status" value="1"/>
</dbReference>
<dbReference type="Gene3D" id="3.40.50.300">
    <property type="entry name" value="P-loop containing nucleotide triphosphate hydrolases"/>
    <property type="match status" value="2"/>
</dbReference>
<dbReference type="InterPro" id="IPR011709">
    <property type="entry name" value="DEAD-box_helicase_OB_fold"/>
</dbReference>
<dbReference type="InterPro" id="IPR011545">
    <property type="entry name" value="DEAD/DEAH_box_helicase_dom"/>
</dbReference>
<dbReference type="InterPro" id="IPR044756">
    <property type="entry name" value="DHX15_DEXHc"/>
</dbReference>
<dbReference type="InterPro" id="IPR048333">
    <property type="entry name" value="HA2_WH"/>
</dbReference>
<dbReference type="InterPro" id="IPR007502">
    <property type="entry name" value="Helicase-assoc_dom"/>
</dbReference>
<dbReference type="InterPro" id="IPR014001">
    <property type="entry name" value="Helicase_ATP-bd"/>
</dbReference>
<dbReference type="InterPro" id="IPR001650">
    <property type="entry name" value="Helicase_C-like"/>
</dbReference>
<dbReference type="InterPro" id="IPR027417">
    <property type="entry name" value="P-loop_NTPase"/>
</dbReference>
<dbReference type="PANTHER" id="PTHR18934">
    <property type="entry name" value="ATP-DEPENDENT RNA HELICASE"/>
    <property type="match status" value="1"/>
</dbReference>
<dbReference type="PANTHER" id="PTHR18934:SF263">
    <property type="entry name" value="PRE-MRNA-SPLICING FACTOR ATP-DEPENDENT RNA HELICASE DEAH3-RELATED"/>
    <property type="match status" value="1"/>
</dbReference>
<dbReference type="Pfam" id="PF00270">
    <property type="entry name" value="DEAD"/>
    <property type="match status" value="1"/>
</dbReference>
<dbReference type="Pfam" id="PF21010">
    <property type="entry name" value="HA2_C"/>
    <property type="match status" value="1"/>
</dbReference>
<dbReference type="Pfam" id="PF04408">
    <property type="entry name" value="HA2_N"/>
    <property type="match status" value="1"/>
</dbReference>
<dbReference type="Pfam" id="PF00271">
    <property type="entry name" value="Helicase_C"/>
    <property type="match status" value="1"/>
</dbReference>
<dbReference type="Pfam" id="PF07717">
    <property type="entry name" value="OB_NTP_bind"/>
    <property type="match status" value="1"/>
</dbReference>
<dbReference type="SMART" id="SM00487">
    <property type="entry name" value="DEXDc"/>
    <property type="match status" value="1"/>
</dbReference>
<dbReference type="SMART" id="SM00847">
    <property type="entry name" value="HA2"/>
    <property type="match status" value="1"/>
</dbReference>
<dbReference type="SMART" id="SM00490">
    <property type="entry name" value="HELICc"/>
    <property type="match status" value="1"/>
</dbReference>
<dbReference type="SUPFAM" id="SSF52540">
    <property type="entry name" value="P-loop containing nucleoside triphosphate hydrolases"/>
    <property type="match status" value="1"/>
</dbReference>
<dbReference type="PROSITE" id="PS51192">
    <property type="entry name" value="HELICASE_ATP_BIND_1"/>
    <property type="match status" value="1"/>
</dbReference>
<dbReference type="PROSITE" id="PS51194">
    <property type="entry name" value="HELICASE_CTER"/>
    <property type="match status" value="1"/>
</dbReference>
<name>PRP43_ARATH</name>
<sequence>MGTERKRKVSLFDVMEDPSLSSKNTKSNGLGLAAAAGGGSNLINKWNGKAYSQRYFEILEKRRDLPVWLQKDDFLNTLNSNQTLILVGETGSGKTTQIPQFVLDAVVADNSDKGRKWLVGCTQPRRVAAMSVSRRVADEMDVSIGEEVGYSIRFEDCTSSRTMLKYLTDGMLLREAMADPLLERYKVIILDEAHERTLATDVLFGLLKEVLRNRPDLKLVVMSATLEAEKFQEYFSGAPLMKVPGRLHPVEIFYTQEPERDYLEAAIRTVVQIHMCEPPGDILVFLTGEEEIEDACRKINKEVSNLGDQVGPVKVVPLYSTLPPAMQQKIFDPAPVPLTEGGPAGRKIVVSTNIAETSLTIDGIVYVIDPGFAKQKVYNPRIRVESLLVSPISKASAHQRSGRAGRTRPGKCFRLYTEKSFNNDLQPQTYPEILRSNLANTVLTLKKLGIDDLVHFDFMDPPAPETLMRALEVLNYLGALDDEGNLTKTGEIMSEFPLDPQMSKMLIVSPEFNCSNEILSVSAMLSVPNCFVRPREAQKAADEAKARFGHIDGDHLTLLNVYHAYKQNNEDPNWCFENFVNNRAMKSADNVRQQLVRIMSRFNLKMCSTDFNSRDYYVNIRKAMLAGYFMQVAHLERTGHYLTVKDNQVVHLHPSNCLDHKPEWVIYNEYVLTTRNFIRTVTDIRGEWLVDVAQHYYDLSNFPNCEAKRALEKLYKKREREKNESKNRK</sequence>
<evidence type="ECO:0000255" key="1">
    <source>
        <dbReference type="PROSITE-ProRule" id="PRU00541"/>
    </source>
</evidence>
<evidence type="ECO:0000255" key="2">
    <source>
        <dbReference type="PROSITE-ProRule" id="PRU00542"/>
    </source>
</evidence>
<evidence type="ECO:0000303" key="3">
    <source>
    </source>
</evidence>
<evidence type="ECO:0000305" key="4"/>
<evidence type="ECO:0000312" key="5">
    <source>
        <dbReference type="Araport" id="AT2G47250"/>
    </source>
</evidence>
<evidence type="ECO:0000312" key="6">
    <source>
        <dbReference type="EMBL" id="AAB63825.1"/>
    </source>
</evidence>
<reference key="1">
    <citation type="journal article" date="1999" name="Nature">
        <title>Sequence and analysis of chromosome 2 of the plant Arabidopsis thaliana.</title>
        <authorList>
            <person name="Lin X."/>
            <person name="Kaul S."/>
            <person name="Rounsley S.D."/>
            <person name="Shea T.P."/>
            <person name="Benito M.-I."/>
            <person name="Town C.D."/>
            <person name="Fujii C.Y."/>
            <person name="Mason T.M."/>
            <person name="Bowman C.L."/>
            <person name="Barnstead M.E."/>
            <person name="Feldblyum T.V."/>
            <person name="Buell C.R."/>
            <person name="Ketchum K.A."/>
            <person name="Lee J.J."/>
            <person name="Ronning C.M."/>
            <person name="Koo H.L."/>
            <person name="Moffat K.S."/>
            <person name="Cronin L.A."/>
            <person name="Shen M."/>
            <person name="Pai G."/>
            <person name="Van Aken S."/>
            <person name="Umayam L."/>
            <person name="Tallon L.J."/>
            <person name="Gill J.E."/>
            <person name="Adams M.D."/>
            <person name="Carrera A.J."/>
            <person name="Creasy T.H."/>
            <person name="Goodman H.M."/>
            <person name="Somerville C.R."/>
            <person name="Copenhaver G.P."/>
            <person name="Preuss D."/>
            <person name="Nierman W.C."/>
            <person name="White O."/>
            <person name="Eisen J.A."/>
            <person name="Salzberg S.L."/>
            <person name="Fraser C.M."/>
            <person name="Venter J.C."/>
        </authorList>
    </citation>
    <scope>NUCLEOTIDE SEQUENCE [LARGE SCALE GENOMIC DNA]</scope>
    <source>
        <strain>cv. Columbia</strain>
    </source>
</reference>
<reference key="2">
    <citation type="journal article" date="2017" name="Plant J.">
        <title>Araport11: a complete reannotation of the Arabidopsis thaliana reference genome.</title>
        <authorList>
            <person name="Cheng C.Y."/>
            <person name="Krishnakumar V."/>
            <person name="Chan A.P."/>
            <person name="Thibaud-Nissen F."/>
            <person name="Schobel S."/>
            <person name="Town C.D."/>
        </authorList>
    </citation>
    <scope>GENOME REANNOTATION</scope>
    <source>
        <strain>cv. Columbia</strain>
    </source>
</reference>
<reference key="3">
    <citation type="journal article" date="2003" name="Science">
        <title>Empirical analysis of transcriptional activity in the Arabidopsis genome.</title>
        <authorList>
            <person name="Yamada K."/>
            <person name="Lim J."/>
            <person name="Dale J.M."/>
            <person name="Chen H."/>
            <person name="Shinn P."/>
            <person name="Palm C.J."/>
            <person name="Southwick A.M."/>
            <person name="Wu H.C."/>
            <person name="Kim C.J."/>
            <person name="Nguyen M."/>
            <person name="Pham P.K."/>
            <person name="Cheuk R.F."/>
            <person name="Karlin-Newmann G."/>
            <person name="Liu S.X."/>
            <person name="Lam B."/>
            <person name="Sakano H."/>
            <person name="Wu T."/>
            <person name="Yu G."/>
            <person name="Miranda M."/>
            <person name="Quach H.L."/>
            <person name="Tripp M."/>
            <person name="Chang C.H."/>
            <person name="Lee J.M."/>
            <person name="Toriumi M.J."/>
            <person name="Chan M.M."/>
            <person name="Tang C.C."/>
            <person name="Onodera C.S."/>
            <person name="Deng J.M."/>
            <person name="Akiyama K."/>
            <person name="Ansari Y."/>
            <person name="Arakawa T."/>
            <person name="Banh J."/>
            <person name="Banno F."/>
            <person name="Bowser L."/>
            <person name="Brooks S.Y."/>
            <person name="Carninci P."/>
            <person name="Chao Q."/>
            <person name="Choy N."/>
            <person name="Enju A."/>
            <person name="Goldsmith A.D."/>
            <person name="Gurjal M."/>
            <person name="Hansen N.F."/>
            <person name="Hayashizaki Y."/>
            <person name="Johnson-Hopson C."/>
            <person name="Hsuan V.W."/>
            <person name="Iida K."/>
            <person name="Karnes M."/>
            <person name="Khan S."/>
            <person name="Koesema E."/>
            <person name="Ishida J."/>
            <person name="Jiang P.X."/>
            <person name="Jones T."/>
            <person name="Kawai J."/>
            <person name="Kamiya A."/>
            <person name="Meyers C."/>
            <person name="Nakajima M."/>
            <person name="Narusaka M."/>
            <person name="Seki M."/>
            <person name="Sakurai T."/>
            <person name="Satou M."/>
            <person name="Tamse R."/>
            <person name="Vaysberg M."/>
            <person name="Wallender E.K."/>
            <person name="Wong C."/>
            <person name="Yamamura Y."/>
            <person name="Yuan S."/>
            <person name="Shinozaki K."/>
            <person name="Davis R.W."/>
            <person name="Theologis A."/>
            <person name="Ecker J.R."/>
        </authorList>
    </citation>
    <scope>NUCLEOTIDE SEQUENCE [LARGE SCALE MRNA]</scope>
    <source>
        <strain>cv. Columbia</strain>
    </source>
</reference>
<reference key="4">
    <citation type="journal article" date="2006" name="Proc. Natl. Acad. Sci. U.S.A.">
        <title>Defective RNA processing enhances RNA silencing and influences flowering of Arabidopsis.</title>
        <authorList>
            <person name="Herr A.J."/>
            <person name="Molnar A."/>
            <person name="Jones A."/>
            <person name="Baulcombe D.C."/>
        </authorList>
    </citation>
    <scope>IDENTIFICATION</scope>
</reference>
<reference key="5">
    <citation type="journal article" date="2013" name="PLoS ONE">
        <title>Genome-wide comparative in silico analysis of the RNA helicase gene family in Zea mays and Glycine max: a comparison with Arabidopsis and Oryza sativa.</title>
        <authorList>
            <person name="Xu R."/>
            <person name="Zhang S."/>
            <person name="Huang J."/>
            <person name="Zheng C."/>
        </authorList>
    </citation>
    <scope>GENE FAMILY</scope>
</reference>
<protein>
    <recommendedName>
        <fullName evidence="4">Probable pre-mRNA-splicing factor ATP-dependent RNA helicase DEAH3</fullName>
        <ecNumber>3.6.4.13</ecNumber>
    </recommendedName>
    <alternativeName>
        <fullName evidence="3">DEAH RNA helicase homolog PRP43</fullName>
    </alternativeName>
</protein>
<comment type="function">
    <text evidence="4">May be involved in pre-mRNA splicing.</text>
</comment>
<comment type="catalytic activity">
    <reaction>
        <text>ATP + H2O = ADP + phosphate + H(+)</text>
        <dbReference type="Rhea" id="RHEA:13065"/>
        <dbReference type="ChEBI" id="CHEBI:15377"/>
        <dbReference type="ChEBI" id="CHEBI:15378"/>
        <dbReference type="ChEBI" id="CHEBI:30616"/>
        <dbReference type="ChEBI" id="CHEBI:43474"/>
        <dbReference type="ChEBI" id="CHEBI:456216"/>
        <dbReference type="EC" id="3.6.4.13"/>
    </reaction>
</comment>
<comment type="similarity">
    <text evidence="4">Belongs to the DEAD box helicase family. DEAH subfamily. PRP43 sub-subfamily.</text>
</comment>
<keyword id="KW-0067">ATP-binding</keyword>
<keyword id="KW-0347">Helicase</keyword>
<keyword id="KW-0378">Hydrolase</keyword>
<keyword id="KW-0507">mRNA processing</keyword>
<keyword id="KW-0508">mRNA splicing</keyword>
<keyword id="KW-0547">Nucleotide-binding</keyword>
<keyword id="KW-1185">Reference proteome</keyword>
<keyword id="KW-0747">Spliceosome</keyword>
<gene>
    <name evidence="5" type="ordered locus">At2g47250</name>
    <name evidence="6" type="ORF">T08I13.9</name>
</gene>
<accession>O22899</accession>
<organism>
    <name type="scientific">Arabidopsis thaliana</name>
    <name type="common">Mouse-ear cress</name>
    <dbReference type="NCBI Taxonomy" id="3702"/>
    <lineage>
        <taxon>Eukaryota</taxon>
        <taxon>Viridiplantae</taxon>
        <taxon>Streptophyta</taxon>
        <taxon>Embryophyta</taxon>
        <taxon>Tracheophyta</taxon>
        <taxon>Spermatophyta</taxon>
        <taxon>Magnoliopsida</taxon>
        <taxon>eudicotyledons</taxon>
        <taxon>Gunneridae</taxon>
        <taxon>Pentapetalae</taxon>
        <taxon>rosids</taxon>
        <taxon>malvids</taxon>
        <taxon>Brassicales</taxon>
        <taxon>Brassicaceae</taxon>
        <taxon>Camelineae</taxon>
        <taxon>Arabidopsis</taxon>
    </lineage>
</organism>
<feature type="chain" id="PRO_0000055141" description="Probable pre-mRNA-splicing factor ATP-dependent RNA helicase DEAH3">
    <location>
        <begin position="1"/>
        <end position="729"/>
    </location>
</feature>
<feature type="domain" description="Helicase ATP-binding" evidence="1">
    <location>
        <begin position="75"/>
        <end position="244"/>
    </location>
</feature>
<feature type="domain" description="Helicase C-terminal" evidence="2">
    <location>
        <begin position="269"/>
        <end position="449"/>
    </location>
</feature>
<feature type="short sequence motif" description="DEAH box" evidence="1">
    <location>
        <begin position="191"/>
        <end position="194"/>
    </location>
</feature>
<feature type="binding site" evidence="1">
    <location>
        <begin position="88"/>
        <end position="95"/>
    </location>
    <ligand>
        <name>ATP</name>
        <dbReference type="ChEBI" id="CHEBI:30616"/>
    </ligand>
</feature>